<feature type="chain" id="PRO_1000187570" description="Segregation and condensation protein A">
    <location>
        <begin position="1"/>
        <end position="242"/>
    </location>
</feature>
<evidence type="ECO:0000255" key="1">
    <source>
        <dbReference type="HAMAP-Rule" id="MF_01805"/>
    </source>
</evidence>
<proteinExistence type="inferred from homology"/>
<comment type="function">
    <text evidence="1">Participates in chromosomal partition during cell division. May act via the formation of a condensin-like complex containing Smc and ScpB that pull DNA away from mid-cell into both cell halves.</text>
</comment>
<comment type="subunit">
    <text evidence="1">Component of a cohesin-like complex composed of ScpA, ScpB and the Smc homodimer, in which ScpA and ScpB bind to the head domain of Smc. The presence of the three proteins is required for the association of the complex with DNA.</text>
</comment>
<comment type="subcellular location">
    <subcellularLocation>
        <location evidence="1">Cytoplasm</location>
    </subcellularLocation>
    <text evidence="1">Associated with two foci at the outer edges of the nucleoid region in young cells, and at four foci within both cell halves in older cells.</text>
</comment>
<comment type="similarity">
    <text evidence="1">Belongs to the ScpA family.</text>
</comment>
<dbReference type="EMBL" id="CP000918">
    <property type="protein sequence ID" value="ACO17726.1"/>
    <property type="molecule type" value="Genomic_DNA"/>
</dbReference>
<dbReference type="RefSeq" id="WP_000351907.1">
    <property type="nucleotide sequence ID" value="NC_012468.1"/>
</dbReference>
<dbReference type="SMR" id="C1C9E2"/>
<dbReference type="KEGG" id="snm:SP70585_1931"/>
<dbReference type="HOGENOM" id="CLU_038686_3_3_9"/>
<dbReference type="Proteomes" id="UP000002211">
    <property type="component" value="Chromosome"/>
</dbReference>
<dbReference type="GO" id="GO:0005737">
    <property type="term" value="C:cytoplasm"/>
    <property type="evidence" value="ECO:0007669"/>
    <property type="project" value="UniProtKB-SubCell"/>
</dbReference>
<dbReference type="GO" id="GO:0051301">
    <property type="term" value="P:cell division"/>
    <property type="evidence" value="ECO:0007669"/>
    <property type="project" value="UniProtKB-KW"/>
</dbReference>
<dbReference type="GO" id="GO:0007059">
    <property type="term" value="P:chromosome segregation"/>
    <property type="evidence" value="ECO:0007669"/>
    <property type="project" value="UniProtKB-UniRule"/>
</dbReference>
<dbReference type="GO" id="GO:0006260">
    <property type="term" value="P:DNA replication"/>
    <property type="evidence" value="ECO:0007669"/>
    <property type="project" value="UniProtKB-UniRule"/>
</dbReference>
<dbReference type="Gene3D" id="6.10.250.2410">
    <property type="match status" value="1"/>
</dbReference>
<dbReference type="Gene3D" id="1.10.10.580">
    <property type="entry name" value="Structural maintenance of chromosome 1. Chain E"/>
    <property type="match status" value="1"/>
</dbReference>
<dbReference type="HAMAP" id="MF_01805">
    <property type="entry name" value="ScpA"/>
    <property type="match status" value="1"/>
</dbReference>
<dbReference type="InterPro" id="IPR003768">
    <property type="entry name" value="ScpA"/>
</dbReference>
<dbReference type="InterPro" id="IPR023093">
    <property type="entry name" value="ScpA-like_C"/>
</dbReference>
<dbReference type="NCBIfam" id="NF000993">
    <property type="entry name" value="PRK00104.1-2"/>
    <property type="match status" value="1"/>
</dbReference>
<dbReference type="PANTHER" id="PTHR33969">
    <property type="entry name" value="SEGREGATION AND CONDENSATION PROTEIN A"/>
    <property type="match status" value="1"/>
</dbReference>
<dbReference type="PANTHER" id="PTHR33969:SF2">
    <property type="entry name" value="SEGREGATION AND CONDENSATION PROTEIN A"/>
    <property type="match status" value="1"/>
</dbReference>
<dbReference type="Pfam" id="PF02616">
    <property type="entry name" value="SMC_ScpA"/>
    <property type="match status" value="1"/>
</dbReference>
<gene>
    <name evidence="1" type="primary">scpA</name>
    <name type="ordered locus">SP70585_1931</name>
</gene>
<sequence>MDIKLKDFEGPLDLLLHLVSKYQMDIYDVPITEVIEQYLAYVSTLQAMRLEVTGEYMVMASQLMLIKSRKLLPKVAEVTDLGDDLEQDLLSQIEEYRKFKLLGEHLEAKHQERAQYYSKAPTELIYEDAELVHDKTTIDLFLAFSNILAKKKEEFAQNHTTILRDEYKIEDMMIIVKESLIGRDQLRLQDLFKEAQNVQEVITLFLATLELIKTQELILVQEESFGDIYLMEKKEESQVPQS</sequence>
<accession>C1C9E2</accession>
<name>SCPA_STRP7</name>
<organism>
    <name type="scientific">Streptococcus pneumoniae (strain 70585)</name>
    <dbReference type="NCBI Taxonomy" id="488221"/>
    <lineage>
        <taxon>Bacteria</taxon>
        <taxon>Bacillati</taxon>
        <taxon>Bacillota</taxon>
        <taxon>Bacilli</taxon>
        <taxon>Lactobacillales</taxon>
        <taxon>Streptococcaceae</taxon>
        <taxon>Streptococcus</taxon>
    </lineage>
</organism>
<keyword id="KW-0131">Cell cycle</keyword>
<keyword id="KW-0132">Cell division</keyword>
<keyword id="KW-0159">Chromosome partition</keyword>
<keyword id="KW-0963">Cytoplasm</keyword>
<protein>
    <recommendedName>
        <fullName evidence="1">Segregation and condensation protein A</fullName>
    </recommendedName>
</protein>
<reference key="1">
    <citation type="journal article" date="2010" name="Genome Biol.">
        <title>Structure and dynamics of the pan-genome of Streptococcus pneumoniae and closely related species.</title>
        <authorList>
            <person name="Donati C."/>
            <person name="Hiller N.L."/>
            <person name="Tettelin H."/>
            <person name="Muzzi A."/>
            <person name="Croucher N.J."/>
            <person name="Angiuoli S.V."/>
            <person name="Oggioni M."/>
            <person name="Dunning Hotopp J.C."/>
            <person name="Hu F.Z."/>
            <person name="Riley D.R."/>
            <person name="Covacci A."/>
            <person name="Mitchell T.J."/>
            <person name="Bentley S.D."/>
            <person name="Kilian M."/>
            <person name="Ehrlich G.D."/>
            <person name="Rappuoli R."/>
            <person name="Moxon E.R."/>
            <person name="Masignani V."/>
        </authorList>
    </citation>
    <scope>NUCLEOTIDE SEQUENCE [LARGE SCALE GENOMIC DNA]</scope>
    <source>
        <strain>70585</strain>
    </source>
</reference>